<keyword id="KW-0008">Acetylcholine receptor inhibiting toxin</keyword>
<keyword id="KW-0903">Direct protein sequencing</keyword>
<keyword id="KW-1015">Disulfide bond</keyword>
<keyword id="KW-0872">Ion channel impairing toxin</keyword>
<keyword id="KW-0528">Neurotoxin</keyword>
<keyword id="KW-0629">Postsynaptic neurotoxin</keyword>
<keyword id="KW-0964">Secreted</keyword>
<keyword id="KW-0732">Signal</keyword>
<keyword id="KW-0800">Toxin</keyword>
<evidence type="ECO:0000250" key="1"/>
<evidence type="ECO:0000250" key="2">
    <source>
        <dbReference type="UniProtKB" id="P0C8R6"/>
    </source>
</evidence>
<evidence type="ECO:0000255" key="3"/>
<evidence type="ECO:0000269" key="4">
    <source>
    </source>
</evidence>
<evidence type="ECO:0000305" key="5"/>
<sequence length="88" mass="9758">MKTLLLTLVVVTIVCLDFGYARTCLKTPEVKSEPCPPGQEVCYTKAWRDRMCSFRGKVIELGCAATCPRQEPGKEITCCSTDDCNTHP</sequence>
<organism>
    <name type="scientific">Demansia vestigiata</name>
    <name type="common">Lesser black whip snake</name>
    <name type="synonym">Demansia atra</name>
    <dbReference type="NCBI Taxonomy" id="412038"/>
    <lineage>
        <taxon>Eukaryota</taxon>
        <taxon>Metazoa</taxon>
        <taxon>Chordata</taxon>
        <taxon>Craniata</taxon>
        <taxon>Vertebrata</taxon>
        <taxon>Euteleostomi</taxon>
        <taxon>Lepidosauria</taxon>
        <taxon>Squamata</taxon>
        <taxon>Bifurcata</taxon>
        <taxon>Unidentata</taxon>
        <taxon>Episquamata</taxon>
        <taxon>Toxicofera</taxon>
        <taxon>Serpentes</taxon>
        <taxon>Colubroidea</taxon>
        <taxon>Elapidae</taxon>
        <taxon>Notechinae</taxon>
        <taxon>Demansia</taxon>
    </lineage>
</organism>
<protein>
    <recommendedName>
        <fullName>Long neurotoxin LNTX-2</fullName>
    </recommendedName>
</protein>
<name>3L22_DEMVE</name>
<reference key="1">
    <citation type="journal article" date="2007" name="J. Proteome Res.">
        <title>Diversity of toxic components from the venom of the evolutionarily distinct black whip snake, Demansia vestigiata.</title>
        <authorList>
            <person name="St Pierre L."/>
            <person name="Birrell G.W."/>
            <person name="Earl S.T.H."/>
            <person name="Wallis T.P."/>
            <person name="Gorman J.J."/>
            <person name="de Jersey J."/>
            <person name="Masci P.P."/>
            <person name="Lavin M.F."/>
        </authorList>
    </citation>
    <scope>NUCLEOTIDE SEQUENCE [MRNA]</scope>
    <scope>PROTEIN SEQUENCE OF 34-45</scope>
    <scope>IDENTIFICATION BY MASS SPECTROMETRY</scope>
    <scope>SUBCELLULAR LOCATION</scope>
</reference>
<accession>A6MFK5</accession>
<comment type="function">
    <text evidence="2">Binds with high affinity to muscular nicotinic acetylcholine receptors (nAChRs), whereas it binds with a low affinity to neuronal alpha-7/CHRNA7 nAChRs.</text>
</comment>
<comment type="subcellular location">
    <subcellularLocation>
        <location evidence="4">Secreted</location>
    </subcellularLocation>
</comment>
<comment type="tissue specificity">
    <text evidence="5">Expressed by the venom gland.</text>
</comment>
<comment type="miscellaneous">
    <text>Has the length of long neurotoxins, but only 4 disulfide bonds, as short neurotoxins.</text>
</comment>
<comment type="similarity">
    <text evidence="5">Belongs to the three-finger toxin family. Long-chain subfamily. Type II alpha-neurotoxin sub-subfamily.</text>
</comment>
<proteinExistence type="evidence at protein level"/>
<dbReference type="EMBL" id="DQ917516">
    <property type="protein sequence ID" value="ABK63545.1"/>
    <property type="molecule type" value="mRNA"/>
</dbReference>
<dbReference type="SMR" id="A6MFK5"/>
<dbReference type="GO" id="GO:0005576">
    <property type="term" value="C:extracellular region"/>
    <property type="evidence" value="ECO:0007669"/>
    <property type="project" value="UniProtKB-SubCell"/>
</dbReference>
<dbReference type="GO" id="GO:0030550">
    <property type="term" value="F:acetylcholine receptor inhibitor activity"/>
    <property type="evidence" value="ECO:0007669"/>
    <property type="project" value="UniProtKB-KW"/>
</dbReference>
<dbReference type="GO" id="GO:0099106">
    <property type="term" value="F:ion channel regulator activity"/>
    <property type="evidence" value="ECO:0007669"/>
    <property type="project" value="UniProtKB-KW"/>
</dbReference>
<dbReference type="GO" id="GO:0090729">
    <property type="term" value="F:toxin activity"/>
    <property type="evidence" value="ECO:0007669"/>
    <property type="project" value="UniProtKB-KW"/>
</dbReference>
<dbReference type="CDD" id="cd00206">
    <property type="entry name" value="TFP_snake_toxin"/>
    <property type="match status" value="1"/>
</dbReference>
<dbReference type="Gene3D" id="2.10.60.10">
    <property type="entry name" value="CD59"/>
    <property type="match status" value="1"/>
</dbReference>
<dbReference type="InterPro" id="IPR003571">
    <property type="entry name" value="Snake_3FTx"/>
</dbReference>
<dbReference type="InterPro" id="IPR045860">
    <property type="entry name" value="Snake_toxin-like_sf"/>
</dbReference>
<dbReference type="InterPro" id="IPR018354">
    <property type="entry name" value="Snake_toxin_con_site"/>
</dbReference>
<dbReference type="InterPro" id="IPR054131">
    <property type="entry name" value="Toxin_cobra-type"/>
</dbReference>
<dbReference type="Pfam" id="PF21947">
    <property type="entry name" value="Toxin_cobra-type"/>
    <property type="match status" value="1"/>
</dbReference>
<dbReference type="SUPFAM" id="SSF57302">
    <property type="entry name" value="Snake toxin-like"/>
    <property type="match status" value="1"/>
</dbReference>
<dbReference type="PROSITE" id="PS00272">
    <property type="entry name" value="SNAKE_TOXIN"/>
    <property type="match status" value="1"/>
</dbReference>
<feature type="signal peptide" evidence="3">
    <location>
        <begin position="1"/>
        <end position="21"/>
    </location>
</feature>
<feature type="chain" id="PRO_5000254109" description="Long neurotoxin LNTX-2">
    <location>
        <begin position="22"/>
        <end position="88"/>
    </location>
</feature>
<feature type="disulfide bond" evidence="1">
    <location>
        <begin position="24"/>
        <end position="42"/>
    </location>
</feature>
<feature type="disulfide bond" evidence="1">
    <location>
        <begin position="35"/>
        <end position="63"/>
    </location>
</feature>
<feature type="disulfide bond" evidence="1">
    <location>
        <begin position="67"/>
        <end position="78"/>
    </location>
</feature>
<feature type="disulfide bond" evidence="1">
    <location>
        <begin position="79"/>
        <end position="84"/>
    </location>
</feature>